<accession>B0SJT4</accession>
<evidence type="ECO:0000255" key="1">
    <source>
        <dbReference type="HAMAP-Rule" id="MF_00451"/>
    </source>
</evidence>
<sequence length="137" mass="15281">MERTFIMLKPDAVKNKHIGDILQRIEKEGFKILGMKFLKLSLEDAKQFYAVHAARPFYNDLCTYMASGPIVACALERDNAVAHWRDVIGATDPKEAKAGTIRALFAESKEANAVHGSDSVANALQEIAFFFKGYELN</sequence>
<organism>
    <name type="scientific">Leptospira biflexa serovar Patoc (strain Patoc 1 / ATCC 23582 / Paris)</name>
    <dbReference type="NCBI Taxonomy" id="456481"/>
    <lineage>
        <taxon>Bacteria</taxon>
        <taxon>Pseudomonadati</taxon>
        <taxon>Spirochaetota</taxon>
        <taxon>Spirochaetia</taxon>
        <taxon>Leptospirales</taxon>
        <taxon>Leptospiraceae</taxon>
        <taxon>Leptospira</taxon>
    </lineage>
</organism>
<reference key="1">
    <citation type="journal article" date="2008" name="PLoS ONE">
        <title>Genome sequence of the saprophyte Leptospira biflexa provides insights into the evolution of Leptospira and the pathogenesis of leptospirosis.</title>
        <authorList>
            <person name="Picardeau M."/>
            <person name="Bulach D.M."/>
            <person name="Bouchier C."/>
            <person name="Zuerner R.L."/>
            <person name="Zidane N."/>
            <person name="Wilson P.J."/>
            <person name="Creno S."/>
            <person name="Kuczek E.S."/>
            <person name="Bommezzadri S."/>
            <person name="Davis J.C."/>
            <person name="McGrath A."/>
            <person name="Johnson M.J."/>
            <person name="Boursaux-Eude C."/>
            <person name="Seemann T."/>
            <person name="Rouy Z."/>
            <person name="Coppel R.L."/>
            <person name="Rood J.I."/>
            <person name="Lajus A."/>
            <person name="Davies J.K."/>
            <person name="Medigue C."/>
            <person name="Adler B."/>
        </authorList>
    </citation>
    <scope>NUCLEOTIDE SEQUENCE [LARGE SCALE GENOMIC DNA]</scope>
    <source>
        <strain>Patoc 1 / ATCC 23582 / Paris</strain>
    </source>
</reference>
<feature type="chain" id="PRO_1000192267" description="Nucleoside diphosphate kinase">
    <location>
        <begin position="1"/>
        <end position="137"/>
    </location>
</feature>
<feature type="active site" description="Pros-phosphohistidine intermediate" evidence="1">
    <location>
        <position position="115"/>
    </location>
</feature>
<feature type="binding site" evidence="1">
    <location>
        <position position="9"/>
    </location>
    <ligand>
        <name>ATP</name>
        <dbReference type="ChEBI" id="CHEBI:30616"/>
    </ligand>
</feature>
<feature type="binding site" evidence="1">
    <location>
        <position position="57"/>
    </location>
    <ligand>
        <name>ATP</name>
        <dbReference type="ChEBI" id="CHEBI:30616"/>
    </ligand>
</feature>
<feature type="binding site" evidence="1">
    <location>
        <position position="85"/>
    </location>
    <ligand>
        <name>ATP</name>
        <dbReference type="ChEBI" id="CHEBI:30616"/>
    </ligand>
</feature>
<feature type="binding site" evidence="1">
    <location>
        <position position="91"/>
    </location>
    <ligand>
        <name>ATP</name>
        <dbReference type="ChEBI" id="CHEBI:30616"/>
    </ligand>
</feature>
<feature type="binding site" evidence="1">
    <location>
        <position position="102"/>
    </location>
    <ligand>
        <name>ATP</name>
        <dbReference type="ChEBI" id="CHEBI:30616"/>
    </ligand>
</feature>
<feature type="binding site" evidence="1">
    <location>
        <position position="112"/>
    </location>
    <ligand>
        <name>ATP</name>
        <dbReference type="ChEBI" id="CHEBI:30616"/>
    </ligand>
</feature>
<comment type="function">
    <text evidence="1">Major role in the synthesis of nucleoside triphosphates other than ATP. The ATP gamma phosphate is transferred to the NDP beta phosphate via a ping-pong mechanism, using a phosphorylated active-site intermediate.</text>
</comment>
<comment type="catalytic activity">
    <reaction evidence="1">
        <text>a 2'-deoxyribonucleoside 5'-diphosphate + ATP = a 2'-deoxyribonucleoside 5'-triphosphate + ADP</text>
        <dbReference type="Rhea" id="RHEA:44640"/>
        <dbReference type="ChEBI" id="CHEBI:30616"/>
        <dbReference type="ChEBI" id="CHEBI:61560"/>
        <dbReference type="ChEBI" id="CHEBI:73316"/>
        <dbReference type="ChEBI" id="CHEBI:456216"/>
        <dbReference type="EC" id="2.7.4.6"/>
    </reaction>
</comment>
<comment type="catalytic activity">
    <reaction evidence="1">
        <text>a ribonucleoside 5'-diphosphate + ATP = a ribonucleoside 5'-triphosphate + ADP</text>
        <dbReference type="Rhea" id="RHEA:18113"/>
        <dbReference type="ChEBI" id="CHEBI:30616"/>
        <dbReference type="ChEBI" id="CHEBI:57930"/>
        <dbReference type="ChEBI" id="CHEBI:61557"/>
        <dbReference type="ChEBI" id="CHEBI:456216"/>
        <dbReference type="EC" id="2.7.4.6"/>
    </reaction>
</comment>
<comment type="cofactor">
    <cofactor evidence="1">
        <name>Mg(2+)</name>
        <dbReference type="ChEBI" id="CHEBI:18420"/>
    </cofactor>
</comment>
<comment type="subunit">
    <text evidence="1">Homotetramer.</text>
</comment>
<comment type="subcellular location">
    <subcellularLocation>
        <location evidence="1">Cytoplasm</location>
    </subcellularLocation>
</comment>
<comment type="similarity">
    <text evidence="1">Belongs to the NDK family.</text>
</comment>
<protein>
    <recommendedName>
        <fullName evidence="1">Nucleoside diphosphate kinase</fullName>
        <shortName evidence="1">NDK</shortName>
        <shortName evidence="1">NDP kinase</shortName>
        <ecNumber evidence="1">2.7.4.6</ecNumber>
    </recommendedName>
    <alternativeName>
        <fullName evidence="1">Nucleoside-2-P kinase</fullName>
    </alternativeName>
</protein>
<name>NDK_LEPBP</name>
<keyword id="KW-0067">ATP-binding</keyword>
<keyword id="KW-0963">Cytoplasm</keyword>
<keyword id="KW-0418">Kinase</keyword>
<keyword id="KW-0460">Magnesium</keyword>
<keyword id="KW-0479">Metal-binding</keyword>
<keyword id="KW-0546">Nucleotide metabolism</keyword>
<keyword id="KW-0547">Nucleotide-binding</keyword>
<keyword id="KW-0597">Phosphoprotein</keyword>
<keyword id="KW-1185">Reference proteome</keyword>
<keyword id="KW-0808">Transferase</keyword>
<proteinExistence type="inferred from homology"/>
<gene>
    <name evidence="1" type="primary">ndk</name>
    <name type="ordered locus">LEPBI_I0084</name>
</gene>
<dbReference type="EC" id="2.7.4.6" evidence="1"/>
<dbReference type="EMBL" id="CP000786">
    <property type="protein sequence ID" value="ABZ96231.1"/>
    <property type="molecule type" value="Genomic_DNA"/>
</dbReference>
<dbReference type="RefSeq" id="WP_012387121.1">
    <property type="nucleotide sequence ID" value="NC_010602.1"/>
</dbReference>
<dbReference type="SMR" id="B0SJT4"/>
<dbReference type="STRING" id="456481.LEPBI_I0084"/>
<dbReference type="KEGG" id="lbi:LEPBI_I0084"/>
<dbReference type="HOGENOM" id="CLU_060216_8_1_12"/>
<dbReference type="OrthoDB" id="9801161at2"/>
<dbReference type="BioCyc" id="LBIF456481:LEPBI_RS00425-MONOMER"/>
<dbReference type="Proteomes" id="UP000001847">
    <property type="component" value="Chromosome I"/>
</dbReference>
<dbReference type="GO" id="GO:0005737">
    <property type="term" value="C:cytoplasm"/>
    <property type="evidence" value="ECO:0007669"/>
    <property type="project" value="UniProtKB-SubCell"/>
</dbReference>
<dbReference type="GO" id="GO:0005524">
    <property type="term" value="F:ATP binding"/>
    <property type="evidence" value="ECO:0007669"/>
    <property type="project" value="UniProtKB-UniRule"/>
</dbReference>
<dbReference type="GO" id="GO:0046872">
    <property type="term" value="F:metal ion binding"/>
    <property type="evidence" value="ECO:0007669"/>
    <property type="project" value="UniProtKB-KW"/>
</dbReference>
<dbReference type="GO" id="GO:0004550">
    <property type="term" value="F:nucleoside diphosphate kinase activity"/>
    <property type="evidence" value="ECO:0007669"/>
    <property type="project" value="UniProtKB-UniRule"/>
</dbReference>
<dbReference type="GO" id="GO:0006241">
    <property type="term" value="P:CTP biosynthetic process"/>
    <property type="evidence" value="ECO:0007669"/>
    <property type="project" value="UniProtKB-UniRule"/>
</dbReference>
<dbReference type="GO" id="GO:0006183">
    <property type="term" value="P:GTP biosynthetic process"/>
    <property type="evidence" value="ECO:0007669"/>
    <property type="project" value="UniProtKB-UniRule"/>
</dbReference>
<dbReference type="GO" id="GO:0006228">
    <property type="term" value="P:UTP biosynthetic process"/>
    <property type="evidence" value="ECO:0007669"/>
    <property type="project" value="UniProtKB-UniRule"/>
</dbReference>
<dbReference type="CDD" id="cd04413">
    <property type="entry name" value="NDPk_I"/>
    <property type="match status" value="1"/>
</dbReference>
<dbReference type="FunFam" id="3.30.70.141:FF:000003">
    <property type="entry name" value="Nucleoside diphosphate kinase"/>
    <property type="match status" value="1"/>
</dbReference>
<dbReference type="Gene3D" id="3.30.70.141">
    <property type="entry name" value="Nucleoside diphosphate kinase-like domain"/>
    <property type="match status" value="1"/>
</dbReference>
<dbReference type="HAMAP" id="MF_00451">
    <property type="entry name" value="NDP_kinase"/>
    <property type="match status" value="1"/>
</dbReference>
<dbReference type="InterPro" id="IPR034907">
    <property type="entry name" value="NDK-like_dom"/>
</dbReference>
<dbReference type="InterPro" id="IPR036850">
    <property type="entry name" value="NDK-like_dom_sf"/>
</dbReference>
<dbReference type="InterPro" id="IPR001564">
    <property type="entry name" value="Nucleoside_diP_kinase"/>
</dbReference>
<dbReference type="InterPro" id="IPR023005">
    <property type="entry name" value="Nucleoside_diP_kinase_AS"/>
</dbReference>
<dbReference type="NCBIfam" id="NF001908">
    <property type="entry name" value="PRK00668.1"/>
    <property type="match status" value="1"/>
</dbReference>
<dbReference type="NCBIfam" id="NF011114">
    <property type="entry name" value="PRK14542.1"/>
    <property type="match status" value="1"/>
</dbReference>
<dbReference type="PANTHER" id="PTHR46161">
    <property type="entry name" value="NUCLEOSIDE DIPHOSPHATE KINASE"/>
    <property type="match status" value="1"/>
</dbReference>
<dbReference type="PANTHER" id="PTHR46161:SF3">
    <property type="entry name" value="NUCLEOSIDE DIPHOSPHATE KINASE DDB_G0292928-RELATED"/>
    <property type="match status" value="1"/>
</dbReference>
<dbReference type="Pfam" id="PF00334">
    <property type="entry name" value="NDK"/>
    <property type="match status" value="1"/>
</dbReference>
<dbReference type="PRINTS" id="PR01243">
    <property type="entry name" value="NUCDPKINASE"/>
</dbReference>
<dbReference type="SMART" id="SM00562">
    <property type="entry name" value="NDK"/>
    <property type="match status" value="1"/>
</dbReference>
<dbReference type="SUPFAM" id="SSF54919">
    <property type="entry name" value="Nucleoside diphosphate kinase, NDK"/>
    <property type="match status" value="1"/>
</dbReference>
<dbReference type="PROSITE" id="PS00469">
    <property type="entry name" value="NDPK"/>
    <property type="match status" value="1"/>
</dbReference>
<dbReference type="PROSITE" id="PS51374">
    <property type="entry name" value="NDPK_LIKE"/>
    <property type="match status" value="1"/>
</dbReference>